<feature type="chain" id="PRO_0000166369" description="Cellulose synthase A catalytic subunit 3 [UDP-forming]">
    <location>
        <begin position="1"/>
        <end position="1065"/>
    </location>
</feature>
<feature type="topological domain" description="Cytoplasmic" evidence="2">
    <location>
        <begin position="1"/>
        <end position="260"/>
    </location>
</feature>
<feature type="transmembrane region" description="Helical" evidence="2">
    <location>
        <begin position="261"/>
        <end position="281"/>
    </location>
</feature>
<feature type="topological domain" description="Extracellular" evidence="2">
    <location>
        <begin position="282"/>
        <end position="283"/>
    </location>
</feature>
<feature type="transmembrane region" description="Helical" evidence="2">
    <location>
        <begin position="284"/>
        <end position="304"/>
    </location>
</feature>
<feature type="topological domain" description="Cytoplasmic" evidence="2">
    <location>
        <begin position="305"/>
        <end position="842"/>
    </location>
</feature>
<feature type="transmembrane region" description="Helical" evidence="2">
    <location>
        <begin position="843"/>
        <end position="863"/>
    </location>
</feature>
<feature type="topological domain" description="Extracellular" evidence="2">
    <location>
        <begin position="864"/>
        <end position="874"/>
    </location>
</feature>
<feature type="transmembrane region" description="Helical" evidence="2">
    <location>
        <begin position="875"/>
        <end position="895"/>
    </location>
</feature>
<feature type="topological domain" description="Cytoplasmic" evidence="2">
    <location>
        <begin position="896"/>
        <end position="910"/>
    </location>
</feature>
<feature type="transmembrane region" description="Helical" evidence="2">
    <location>
        <begin position="911"/>
        <end position="931"/>
    </location>
</feature>
<feature type="topological domain" description="Extracellular" evidence="2">
    <location>
        <begin position="932"/>
        <end position="961"/>
    </location>
</feature>
<feature type="transmembrane region" description="Helical" evidence="2">
    <location>
        <begin position="962"/>
        <end position="982"/>
    </location>
</feature>
<feature type="topological domain" description="Cytoplasmic" evidence="2">
    <location>
        <begin position="983"/>
        <end position="993"/>
    </location>
</feature>
<feature type="transmembrane region" description="Helical" evidence="2">
    <location>
        <begin position="994"/>
        <end position="1014"/>
    </location>
</feature>
<feature type="topological domain" description="Extracellular" evidence="2">
    <location>
        <begin position="1015"/>
        <end position="1023"/>
    </location>
</feature>
<feature type="transmembrane region" description="Helical" evidence="2">
    <location>
        <begin position="1024"/>
        <end position="1044"/>
    </location>
</feature>
<feature type="topological domain" description="Cytoplasmic" evidence="2">
    <location>
        <begin position="1045"/>
        <end position="1065"/>
    </location>
</feature>
<feature type="zinc finger region" description="RING-type; degenerate" evidence="3">
    <location>
        <begin position="20"/>
        <end position="66"/>
    </location>
</feature>
<feature type="region of interest" description="Disordered" evidence="5">
    <location>
        <begin position="643"/>
        <end position="672"/>
    </location>
</feature>
<feature type="coiled-coil region" evidence="2">
    <location>
        <begin position="433"/>
        <end position="457"/>
    </location>
</feature>
<feature type="compositionally biased region" description="Basic and acidic residues" evidence="5">
    <location>
        <begin position="656"/>
        <end position="670"/>
    </location>
</feature>
<feature type="active site" evidence="2">
    <location>
        <position position="379"/>
    </location>
</feature>
<feature type="active site" evidence="2">
    <location>
        <position position="765"/>
    </location>
</feature>
<feature type="binding site" evidence="1">
    <location>
        <position position="20"/>
    </location>
    <ligand>
        <name>Zn(2+)</name>
        <dbReference type="ChEBI" id="CHEBI:29105"/>
        <label>1</label>
    </ligand>
</feature>
<feature type="binding site" evidence="1">
    <location>
        <position position="23"/>
    </location>
    <ligand>
        <name>Zn(2+)</name>
        <dbReference type="ChEBI" id="CHEBI:29105"/>
        <label>1</label>
    </ligand>
</feature>
<feature type="binding site" evidence="1">
    <location>
        <position position="39"/>
    </location>
    <ligand>
        <name>Zn(2+)</name>
        <dbReference type="ChEBI" id="CHEBI:29105"/>
        <label>2</label>
    </ligand>
</feature>
<feature type="binding site" evidence="1">
    <location>
        <position position="42"/>
    </location>
    <ligand>
        <name>Zn(2+)</name>
        <dbReference type="ChEBI" id="CHEBI:29105"/>
        <label>2</label>
    </ligand>
</feature>
<feature type="binding site" evidence="1">
    <location>
        <position position="47"/>
    </location>
    <ligand>
        <name>Zn(2+)</name>
        <dbReference type="ChEBI" id="CHEBI:29105"/>
        <label>1</label>
    </ligand>
</feature>
<feature type="binding site" evidence="1">
    <location>
        <position position="50"/>
    </location>
    <ligand>
        <name>Zn(2+)</name>
        <dbReference type="ChEBI" id="CHEBI:29105"/>
        <label>1</label>
    </ligand>
</feature>
<feature type="binding site" evidence="1">
    <location>
        <position position="62"/>
    </location>
    <ligand>
        <name>Zn(2+)</name>
        <dbReference type="ChEBI" id="CHEBI:29105"/>
        <label>2</label>
    </ligand>
</feature>
<feature type="binding site" evidence="1">
    <location>
        <position position="65"/>
    </location>
    <ligand>
        <name>Zn(2+)</name>
        <dbReference type="ChEBI" id="CHEBI:29105"/>
        <label>2</label>
    </ligand>
</feature>
<feature type="binding site" evidence="20 34">
    <location>
        <position position="343"/>
    </location>
    <ligand>
        <name>UDP-alpha-D-glucose</name>
        <dbReference type="ChEBI" id="CHEBI:58885"/>
    </ligand>
</feature>
<feature type="binding site" evidence="20 34">
    <location>
        <position position="349"/>
    </location>
    <ligand>
        <name>UDP-alpha-D-glucose</name>
        <dbReference type="ChEBI" id="CHEBI:58885"/>
    </ligand>
</feature>
<feature type="binding site" evidence="20 34">
    <location>
        <position position="350"/>
    </location>
    <ligand>
        <name>UDP-alpha-D-glucose</name>
        <dbReference type="ChEBI" id="CHEBI:58885"/>
    </ligand>
</feature>
<feature type="binding site" evidence="20 34">
    <location>
        <position position="379"/>
    </location>
    <ligand>
        <name>UDP-alpha-D-glucose</name>
        <dbReference type="ChEBI" id="CHEBI:58885"/>
    </ligand>
</feature>
<feature type="binding site" evidence="20 34">
    <location>
        <position position="520"/>
    </location>
    <ligand>
        <name>UDP-alpha-D-glucose</name>
        <dbReference type="ChEBI" id="CHEBI:58885"/>
    </ligand>
</feature>
<feature type="binding site" evidence="20 34">
    <location>
        <position position="521"/>
    </location>
    <ligand>
        <name>Mn(2+)</name>
        <dbReference type="ChEBI" id="CHEBI:29035"/>
    </ligand>
</feature>
<feature type="binding site" evidence="20 34">
    <location>
        <position position="545"/>
    </location>
    <ligand>
        <name>Mn(2+)</name>
        <dbReference type="ChEBI" id="CHEBI:29035"/>
    </ligand>
</feature>
<feature type="modified residue" description="Phosphoserine" evidence="14 36">
    <location>
        <position position="3"/>
    </location>
</feature>
<feature type="modified residue" description="Phosphoserine" evidence="14 35 36 37">
    <location>
        <position position="151"/>
    </location>
</feature>
<feature type="modified residue" description="Phosphoserine" evidence="14">
    <location>
        <position position="211"/>
    </location>
</feature>
<feature type="modified residue" description="Phosphoserine" evidence="14 36 37">
    <location>
        <position position="216"/>
    </location>
</feature>
<feature type="glycosylation site" description="N-linked (GlcNAc...) asparagine" evidence="4">
    <location>
        <position position="938"/>
    </location>
</feature>
<feature type="mutagenesis site" description="In eli1-1; reduced cellulose synthesis and aberrant deposition of lignin." evidence="12">
    <original>S</original>
    <variation>F</variation>
    <location>
        <position position="301"/>
    </location>
</feature>
<feature type="mutagenesis site" description="In eli1-2; reduced cellulose synthesis and aberrant deposition of lignin.">
    <original>A</original>
    <variation>V</variation>
    <location>
        <position position="522"/>
    </location>
</feature>
<feature type="mutagenesis site" description="Reduced homodimerization." evidence="20">
    <original>Q</original>
    <variation>P</variation>
    <location>
        <position position="571"/>
    </location>
</feature>
<feature type="mutagenesis site" description="Abolished homodimerization." evidence="20">
    <original>C</original>
    <variation>P</variation>
    <location>
        <position position="573"/>
    </location>
</feature>
<feature type="mutagenesis site" description="In cev1; reduced amount of crystalline cellulose in roots." evidence="6 9 10">
    <original>G</original>
    <variation>E</variation>
    <location>
        <position position="617"/>
    </location>
</feature>
<feature type="mutagenesis site" description="In ixr1-2; confers resistance to the herbicides isoxaben and thiazolidinones." evidence="7">
    <original>T</original>
    <variation>I</variation>
    <location>
        <position position="942"/>
    </location>
</feature>
<feature type="mutagenesis site" description="In ixr1-1; confers resistance to the herbicides isoxaben and thiazolidinones." evidence="7">
    <original>G</original>
    <variation>D</variation>
    <location>
        <position position="998"/>
    </location>
</feature>
<feature type="mutagenesis site" description="In rsw5; reduction of cellulose synthesis, and temperature sensitive." evidence="13">
    <original>P</original>
    <variation>S</variation>
    <location>
        <position position="1056"/>
    </location>
</feature>
<feature type="sequence conflict" description="In Ref. 1; AAC39336." evidence="30" ref="1">
    <original>S</original>
    <variation>F</variation>
    <location>
        <position position="377"/>
    </location>
</feature>
<feature type="sequence conflict" description="In Ref. 1; AAC39336." evidence="30" ref="1">
    <original>R</original>
    <variation>G</variation>
    <location>
        <position position="479"/>
    </location>
</feature>
<feature type="sequence conflict" description="In Ref. 1; AAC39336." evidence="30" ref="1">
    <original>P</original>
    <variation>L</variation>
    <location>
        <position position="858"/>
    </location>
</feature>
<feature type="strand" evidence="38">
    <location>
        <begin position="338"/>
        <end position="344"/>
    </location>
</feature>
<feature type="turn" evidence="38">
    <location>
        <begin position="347"/>
        <end position="349"/>
    </location>
</feature>
<feature type="helix" evidence="38">
    <location>
        <begin position="352"/>
        <end position="363"/>
    </location>
</feature>
<feature type="helix" evidence="38">
    <location>
        <begin position="369"/>
        <end position="371"/>
    </location>
</feature>
<feature type="strand" evidence="38">
    <location>
        <begin position="372"/>
        <end position="378"/>
    </location>
</feature>
<feature type="helix" evidence="38">
    <location>
        <begin position="383"/>
        <end position="406"/>
    </location>
</feature>
<feature type="strand" evidence="39">
    <location>
        <begin position="409"/>
        <end position="412"/>
    </location>
</feature>
<feature type="helix" evidence="38">
    <location>
        <begin position="413"/>
        <end position="416"/>
    </location>
</feature>
<feature type="helix" evidence="39">
    <location>
        <begin position="423"/>
        <end position="425"/>
    </location>
</feature>
<feature type="helix" evidence="38">
    <location>
        <begin position="431"/>
        <end position="457"/>
    </location>
</feature>
<feature type="strand" evidence="38">
    <location>
        <begin position="470"/>
        <end position="472"/>
    </location>
</feature>
<feature type="strand" evidence="38">
    <location>
        <begin position="484"/>
        <end position="490"/>
    </location>
</feature>
<feature type="strand" evidence="38">
    <location>
        <begin position="504"/>
        <end position="509"/>
    </location>
</feature>
<feature type="helix" evidence="38">
    <location>
        <begin position="520"/>
        <end position="535"/>
    </location>
</feature>
<feature type="strand" evidence="38">
    <location>
        <begin position="539"/>
        <end position="544"/>
    </location>
</feature>
<feature type="helix" evidence="38">
    <location>
        <begin position="555"/>
        <end position="563"/>
    </location>
</feature>
<feature type="strand" evidence="38">
    <location>
        <begin position="596"/>
        <end position="600"/>
    </location>
</feature>
<feature type="strand" evidence="38">
    <location>
        <begin position="605"/>
        <end position="610"/>
    </location>
</feature>
<feature type="strand" evidence="38">
    <location>
        <begin position="612"/>
        <end position="614"/>
    </location>
</feature>
<feature type="strand" evidence="38">
    <location>
        <begin position="618"/>
        <end position="621"/>
    </location>
</feature>
<feature type="helix" evidence="38">
    <location>
        <begin position="622"/>
        <end position="626"/>
    </location>
</feature>
<feature type="helix" evidence="38">
    <location>
        <begin position="711"/>
        <end position="716"/>
    </location>
</feature>
<feature type="strand" evidence="39">
    <location>
        <begin position="719"/>
        <end position="722"/>
    </location>
</feature>
<feature type="helix" evidence="38">
    <location>
        <begin position="730"/>
        <end position="739"/>
    </location>
</feature>
<feature type="turn" evidence="38">
    <location>
        <begin position="743"/>
        <end position="748"/>
    </location>
</feature>
<feature type="turn" evidence="38">
    <location>
        <begin position="751"/>
        <end position="753"/>
    </location>
</feature>
<feature type="strand" evidence="38">
    <location>
        <begin position="754"/>
        <end position="757"/>
    </location>
</feature>
<feature type="strand" evidence="38">
    <location>
        <begin position="761"/>
        <end position="763"/>
    </location>
</feature>
<feature type="strand" evidence="38">
    <location>
        <begin position="767"/>
        <end position="772"/>
    </location>
</feature>
<feature type="strand" evidence="38">
    <location>
        <begin position="774"/>
        <end position="782"/>
    </location>
</feature>
<feature type="helix" evidence="39">
    <location>
        <begin position="797"/>
        <end position="807"/>
    </location>
</feature>
<feature type="turn" evidence="39">
    <location>
        <begin position="808"/>
        <end position="810"/>
    </location>
</feature>
<sequence length="1065" mass="119683">MESEGETAGKPMKNIVPQTCQICSDNVGKTVDGDRFVACDICSFPVCRPCYEYERKDGNQSCPQCKTRYKRLKGSPAIPGDKDEDGLADEGTVEFNYPQKEKISERMLGWHLTRGKGEEMGEPQYDKEVSHNHLPRLTSRQDTSGEFSAASPERLSVSSTIAGGKRLPYSSDVNQSPNRRIVDPVGLGNVAWKERVDGWKMKQEKNTGPVSTQAASERGGVDIDASTDILADEALLNDEARQPLSRKVSIPSSRINPYRMVIMLRLVILCLFLHYRITNPVPNAFALWLVSVICEIWFALSWILDQFPKWFPVNRETYLDRLALRYDREGEPSQLAAVDIFVSTVDPLKEPPLVTANTVLSILAVDYPVDKVSCYVSDDGAAMLSFESLAETSEFARKWVPFCKKYSIEPRAPEWYFAAKIDYLKDKVQTSFVKDRRAMKREYEEFKIRINALVSKALKCPEEGWVMQDGTPWPGNNTRDHPGMIQVFLGQNGGLDAEGNELPRLVYVSREKRPGFQHHKKAGAMNALVRVSAVLTNGPFILNLDCDHYINNSKALREAMCFLMDPNLGKQVCYVQFPQRFDGIDKNDRYANRNTVFFDINLRGLDGIQGPVYVGTGCVFNRTALYGYEPPIKVKHKKPSLLSKLCGGSRKKNSKAKKESDKKKSGRHTDSTVPVFNLDDIEEGVEGAGFDDEKALLMSQMSLEKRFGQSAVFVASTLMENGGVPPSATPENLLKEAIHVISCGYEDKSDWGMEIGWIYGSVTEDILTGFKMHARGWRSIYCMPKLPAFKGSAPINLSDRLNQVLRWALGSVEILFSRHCPIWYGYNGRLKFLERFAYVNTTIYPITSIPLLMYCTLPAVCLFTNQFIIPQISNIASIWFLSLFLSIFATGILEMRWSGVGIDEWWRNEQFWVIGGVSAHLFAVFQGILKVLAGIDTNFTVTSKASDEDGDFAELYLFKWTTLLIPPTTLLIVNLVGVVAGVSYAINSGYQSWGPLFGKLFFAFWVIVHLYPFLKGLMGRQNRTPTIVVVWSVLLASIFSLLWVRIDPFTSRVTGPDILECGINC</sequence>
<accession>Q941L0</accession>
<accession>O48948</accession>
<accession>Q0WLU1</accession>
<accession>Q9FHK6</accession>
<dbReference type="EC" id="2.4.1.12" evidence="31"/>
<dbReference type="EMBL" id="AF027174">
    <property type="protein sequence ID" value="AAC39336.1"/>
    <property type="molecule type" value="mRNA"/>
</dbReference>
<dbReference type="EMBL" id="AB018111">
    <property type="protein sequence ID" value="BAB09693.1"/>
    <property type="molecule type" value="Genomic_DNA"/>
</dbReference>
<dbReference type="EMBL" id="CP002688">
    <property type="protein sequence ID" value="AED90836.1"/>
    <property type="molecule type" value="Genomic_DNA"/>
</dbReference>
<dbReference type="EMBL" id="AY045960">
    <property type="protein sequence ID" value="AAK76634.2"/>
    <property type="molecule type" value="mRNA"/>
</dbReference>
<dbReference type="EMBL" id="BT002335">
    <property type="protein sequence ID" value="AAN86168.1"/>
    <property type="molecule type" value="mRNA"/>
</dbReference>
<dbReference type="EMBL" id="AK230097">
    <property type="protein sequence ID" value="BAF01916.1"/>
    <property type="molecule type" value="mRNA"/>
</dbReference>
<dbReference type="PIR" id="T52054">
    <property type="entry name" value="T52054"/>
</dbReference>
<dbReference type="RefSeq" id="NP_196136.1">
    <property type="nucleotide sequence ID" value="NM_120599.4"/>
</dbReference>
<dbReference type="PDB" id="7CK1">
    <property type="method" value="X-ray"/>
    <property type="resolution" value="2.35 A"/>
    <property type="chains" value="A/B=317-630, A/B=702-792"/>
</dbReference>
<dbReference type="PDB" id="7CK2">
    <property type="method" value="X-ray"/>
    <property type="resolution" value="2.05 A"/>
    <property type="chains" value="A/B=317-630, A/B=702-792"/>
</dbReference>
<dbReference type="PDB" id="7CK3">
    <property type="method" value="X-ray"/>
    <property type="resolution" value="2.90 A"/>
    <property type="chains" value="A/B=317-630, A/B=702-811"/>
</dbReference>
<dbReference type="PDBsum" id="7CK1"/>
<dbReference type="PDBsum" id="7CK2"/>
<dbReference type="PDBsum" id="7CK3"/>
<dbReference type="SMR" id="Q941L0"/>
<dbReference type="BioGRID" id="15678">
    <property type="interactions" value="50"/>
</dbReference>
<dbReference type="DIP" id="DIP-46437N"/>
<dbReference type="FunCoup" id="Q941L0">
    <property type="interactions" value="1282"/>
</dbReference>
<dbReference type="IntAct" id="Q941L0">
    <property type="interactions" value="38"/>
</dbReference>
<dbReference type="STRING" id="3702.Q941L0"/>
<dbReference type="CAZy" id="GT2">
    <property type="family name" value="Glycosyltransferase Family 2"/>
</dbReference>
<dbReference type="TCDB" id="4.D.3.1.4">
    <property type="family name" value="the glycan glucosyl transferase (opgh) family"/>
</dbReference>
<dbReference type="GlyCosmos" id="Q941L0">
    <property type="glycosylation" value="1 site, No reported glycans"/>
</dbReference>
<dbReference type="GlyGen" id="Q941L0">
    <property type="glycosylation" value="2 sites"/>
</dbReference>
<dbReference type="iPTMnet" id="Q941L0"/>
<dbReference type="SwissPalm" id="Q941L0"/>
<dbReference type="PaxDb" id="3702-AT5G05170.1"/>
<dbReference type="ProteomicsDB" id="220387"/>
<dbReference type="EnsemblPlants" id="AT5G05170.1">
    <property type="protein sequence ID" value="AT5G05170.1"/>
    <property type="gene ID" value="AT5G05170"/>
</dbReference>
<dbReference type="GeneID" id="830399"/>
<dbReference type="Gramene" id="AT5G05170.1">
    <property type="protein sequence ID" value="AT5G05170.1"/>
    <property type="gene ID" value="AT5G05170"/>
</dbReference>
<dbReference type="KEGG" id="ath:AT5G05170"/>
<dbReference type="Araport" id="AT5G05170"/>
<dbReference type="TAIR" id="AT5G05170">
    <property type="gene designation" value="CEV1"/>
</dbReference>
<dbReference type="eggNOG" id="ENOG502QSUQ">
    <property type="taxonomic scope" value="Eukaryota"/>
</dbReference>
<dbReference type="HOGENOM" id="CLU_001418_0_2_1"/>
<dbReference type="InParanoid" id="Q941L0"/>
<dbReference type="OMA" id="RPCYEFE"/>
<dbReference type="OrthoDB" id="72851at2759"/>
<dbReference type="PhylomeDB" id="Q941L0"/>
<dbReference type="BioCyc" id="MetaCyc:MONOMER-2362"/>
<dbReference type="BRENDA" id="2.4.1.12">
    <property type="organism ID" value="399"/>
</dbReference>
<dbReference type="UniPathway" id="UPA00695"/>
<dbReference type="PRO" id="PR:Q941L0"/>
<dbReference type="Proteomes" id="UP000006548">
    <property type="component" value="Chromosome 5"/>
</dbReference>
<dbReference type="ExpressionAtlas" id="Q941L0">
    <property type="expression patterns" value="baseline and differential"/>
</dbReference>
<dbReference type="GO" id="GO:0005768">
    <property type="term" value="C:endosome"/>
    <property type="evidence" value="ECO:0007005"/>
    <property type="project" value="TAIR"/>
</dbReference>
<dbReference type="GO" id="GO:0005794">
    <property type="term" value="C:Golgi apparatus"/>
    <property type="evidence" value="ECO:0000314"/>
    <property type="project" value="UniProtKB"/>
</dbReference>
<dbReference type="GO" id="GO:0000139">
    <property type="term" value="C:Golgi membrane"/>
    <property type="evidence" value="ECO:0007669"/>
    <property type="project" value="UniProtKB-SubCell"/>
</dbReference>
<dbReference type="GO" id="GO:0005886">
    <property type="term" value="C:plasma membrane"/>
    <property type="evidence" value="ECO:0007005"/>
    <property type="project" value="TAIR"/>
</dbReference>
<dbReference type="GO" id="GO:0009506">
    <property type="term" value="C:plasmodesma"/>
    <property type="evidence" value="ECO:0007005"/>
    <property type="project" value="TAIR"/>
</dbReference>
<dbReference type="GO" id="GO:0005802">
    <property type="term" value="C:trans-Golgi network"/>
    <property type="evidence" value="ECO:0007005"/>
    <property type="project" value="TAIR"/>
</dbReference>
<dbReference type="GO" id="GO:0016760">
    <property type="term" value="F:cellulose synthase (UDP-forming) activity"/>
    <property type="evidence" value="ECO:0007669"/>
    <property type="project" value="UniProtKB-EC"/>
</dbReference>
<dbReference type="GO" id="GO:0042803">
    <property type="term" value="F:protein homodimerization activity"/>
    <property type="evidence" value="ECO:0000314"/>
    <property type="project" value="UniProtKB"/>
</dbReference>
<dbReference type="GO" id="GO:0008270">
    <property type="term" value="F:zinc ion binding"/>
    <property type="evidence" value="ECO:0007669"/>
    <property type="project" value="UniProtKB-KW"/>
</dbReference>
<dbReference type="GO" id="GO:0071555">
    <property type="term" value="P:cell wall organization"/>
    <property type="evidence" value="ECO:0007669"/>
    <property type="project" value="UniProtKB-KW"/>
</dbReference>
<dbReference type="GO" id="GO:0030244">
    <property type="term" value="P:cellulose biosynthetic process"/>
    <property type="evidence" value="ECO:0000315"/>
    <property type="project" value="UniProtKB"/>
</dbReference>
<dbReference type="GO" id="GO:0006952">
    <property type="term" value="P:defense response"/>
    <property type="evidence" value="ECO:0000304"/>
    <property type="project" value="TAIR"/>
</dbReference>
<dbReference type="GO" id="GO:0009833">
    <property type="term" value="P:plant-type primary cell wall biogenesis"/>
    <property type="evidence" value="ECO:0000315"/>
    <property type="project" value="TAIR"/>
</dbReference>
<dbReference type="GO" id="GO:0009834">
    <property type="term" value="P:plant-type secondary cell wall biogenesis"/>
    <property type="evidence" value="ECO:0000315"/>
    <property type="project" value="UniProtKB"/>
</dbReference>
<dbReference type="CDD" id="cd16617">
    <property type="entry name" value="mRING-HC-C4C4_CesA"/>
    <property type="match status" value="1"/>
</dbReference>
<dbReference type="FunFam" id="3.90.550.10:FF:000009">
    <property type="entry name" value="Cellulose synthase"/>
    <property type="match status" value="1"/>
</dbReference>
<dbReference type="Gene3D" id="3.90.550.10">
    <property type="entry name" value="Spore Coat Polysaccharide Biosynthesis Protein SpsA, Chain A"/>
    <property type="match status" value="1"/>
</dbReference>
<dbReference type="Gene3D" id="3.30.40.10">
    <property type="entry name" value="Zinc/RING finger domain, C3HC4 (zinc finger)"/>
    <property type="match status" value="1"/>
</dbReference>
<dbReference type="InterPro" id="IPR005150">
    <property type="entry name" value="Cellulose_synth"/>
</dbReference>
<dbReference type="InterPro" id="IPR027934">
    <property type="entry name" value="CES_Znf_RING"/>
</dbReference>
<dbReference type="InterPro" id="IPR029044">
    <property type="entry name" value="Nucleotide-diphossugar_trans"/>
</dbReference>
<dbReference type="InterPro" id="IPR001841">
    <property type="entry name" value="Znf_RING"/>
</dbReference>
<dbReference type="InterPro" id="IPR013083">
    <property type="entry name" value="Znf_RING/FYVE/PHD"/>
</dbReference>
<dbReference type="PANTHER" id="PTHR13301">
    <property type="entry name" value="X-BOX TRANSCRIPTION FACTOR-RELATED"/>
    <property type="match status" value="1"/>
</dbReference>
<dbReference type="Pfam" id="PF03552">
    <property type="entry name" value="Cellulose_synt"/>
    <property type="match status" value="1"/>
</dbReference>
<dbReference type="Pfam" id="PF14569">
    <property type="entry name" value="zf-UDP"/>
    <property type="match status" value="1"/>
</dbReference>
<dbReference type="SUPFAM" id="SSF53448">
    <property type="entry name" value="Nucleotide-diphospho-sugar transferases"/>
    <property type="match status" value="1"/>
</dbReference>
<dbReference type="SUPFAM" id="SSF57850">
    <property type="entry name" value="RING/U-box"/>
    <property type="match status" value="1"/>
</dbReference>
<dbReference type="PROSITE" id="PS50089">
    <property type="entry name" value="ZF_RING_2"/>
    <property type="match status" value="1"/>
</dbReference>
<reference key="1">
    <citation type="journal article" date="1998" name="Science">
        <title>Molecular analysis of cellulose biosynthesis in Arabidopsis.</title>
        <authorList>
            <person name="Arioli T."/>
            <person name="Peng L."/>
            <person name="Betzner A.S."/>
            <person name="Burn J."/>
            <person name="Wittke W."/>
            <person name="Herth W."/>
            <person name="Camilleri C."/>
            <person name="Hoefte H."/>
            <person name="Plazinski J."/>
            <person name="Birch R."/>
            <person name="Cork A."/>
            <person name="Glover J."/>
            <person name="Redmond J."/>
            <person name="Williamson R.E."/>
        </authorList>
    </citation>
    <scope>NUCLEOTIDE SEQUENCE [MRNA]</scope>
    <source>
        <strain>cv. Columbia</strain>
    </source>
</reference>
<reference key="2">
    <citation type="journal article" date="1999" name="DNA Res.">
        <title>Structural analysis of Arabidopsis thaliana chromosome 5. IX. Sequence features of the regions of 1,011,550 bp covered by seventeen P1 and TAC clones.</title>
        <authorList>
            <person name="Kaneko T."/>
            <person name="Katoh T."/>
            <person name="Sato S."/>
            <person name="Nakamura Y."/>
            <person name="Asamizu E."/>
            <person name="Kotani H."/>
            <person name="Miyajima N."/>
            <person name="Tabata S."/>
        </authorList>
    </citation>
    <scope>NUCLEOTIDE SEQUENCE [LARGE SCALE GENOMIC DNA]</scope>
    <source>
        <strain>cv. Columbia</strain>
    </source>
</reference>
<reference key="3">
    <citation type="journal article" date="2017" name="Plant J.">
        <title>Araport11: a complete reannotation of the Arabidopsis thaliana reference genome.</title>
        <authorList>
            <person name="Cheng C.Y."/>
            <person name="Krishnakumar V."/>
            <person name="Chan A.P."/>
            <person name="Thibaud-Nissen F."/>
            <person name="Schobel S."/>
            <person name="Town C.D."/>
        </authorList>
    </citation>
    <scope>GENOME REANNOTATION</scope>
    <source>
        <strain>cv. Columbia</strain>
    </source>
</reference>
<reference key="4">
    <citation type="journal article" date="2003" name="Science">
        <title>Empirical analysis of transcriptional activity in the Arabidopsis genome.</title>
        <authorList>
            <person name="Yamada K."/>
            <person name="Lim J."/>
            <person name="Dale J.M."/>
            <person name="Chen H."/>
            <person name="Shinn P."/>
            <person name="Palm C.J."/>
            <person name="Southwick A.M."/>
            <person name="Wu H.C."/>
            <person name="Kim C.J."/>
            <person name="Nguyen M."/>
            <person name="Pham P.K."/>
            <person name="Cheuk R.F."/>
            <person name="Karlin-Newmann G."/>
            <person name="Liu S.X."/>
            <person name="Lam B."/>
            <person name="Sakano H."/>
            <person name="Wu T."/>
            <person name="Yu G."/>
            <person name="Miranda M."/>
            <person name="Quach H.L."/>
            <person name="Tripp M."/>
            <person name="Chang C.H."/>
            <person name="Lee J.M."/>
            <person name="Toriumi M.J."/>
            <person name="Chan M.M."/>
            <person name="Tang C.C."/>
            <person name="Onodera C.S."/>
            <person name="Deng J.M."/>
            <person name="Akiyama K."/>
            <person name="Ansari Y."/>
            <person name="Arakawa T."/>
            <person name="Banh J."/>
            <person name="Banno F."/>
            <person name="Bowser L."/>
            <person name="Brooks S.Y."/>
            <person name="Carninci P."/>
            <person name="Chao Q."/>
            <person name="Choy N."/>
            <person name="Enju A."/>
            <person name="Goldsmith A.D."/>
            <person name="Gurjal M."/>
            <person name="Hansen N.F."/>
            <person name="Hayashizaki Y."/>
            <person name="Johnson-Hopson C."/>
            <person name="Hsuan V.W."/>
            <person name="Iida K."/>
            <person name="Karnes M."/>
            <person name="Khan S."/>
            <person name="Koesema E."/>
            <person name="Ishida J."/>
            <person name="Jiang P.X."/>
            <person name="Jones T."/>
            <person name="Kawai J."/>
            <person name="Kamiya A."/>
            <person name="Meyers C."/>
            <person name="Nakajima M."/>
            <person name="Narusaka M."/>
            <person name="Seki M."/>
            <person name="Sakurai T."/>
            <person name="Satou M."/>
            <person name="Tamse R."/>
            <person name="Vaysberg M."/>
            <person name="Wallender E.K."/>
            <person name="Wong C."/>
            <person name="Yamamura Y."/>
            <person name="Yuan S."/>
            <person name="Shinozaki K."/>
            <person name="Davis R.W."/>
            <person name="Theologis A."/>
            <person name="Ecker J.R."/>
        </authorList>
    </citation>
    <scope>NUCLEOTIDE SEQUENCE [LARGE SCALE MRNA]</scope>
    <source>
        <strain>cv. Columbia</strain>
    </source>
</reference>
<reference key="5">
    <citation type="submission" date="2006-07" db="EMBL/GenBank/DDBJ databases">
        <title>Large-scale analysis of RIKEN Arabidopsis full-length (RAFL) cDNAs.</title>
        <authorList>
            <person name="Totoki Y."/>
            <person name="Seki M."/>
            <person name="Ishida J."/>
            <person name="Nakajima M."/>
            <person name="Enju A."/>
            <person name="Kamiya A."/>
            <person name="Narusaka M."/>
            <person name="Shin-i T."/>
            <person name="Nakagawa M."/>
            <person name="Sakamoto N."/>
            <person name="Oishi K."/>
            <person name="Kohara Y."/>
            <person name="Kobayashi M."/>
            <person name="Toyoda A."/>
            <person name="Sakaki Y."/>
            <person name="Sakurai T."/>
            <person name="Iida K."/>
            <person name="Akiyama K."/>
            <person name="Satou M."/>
            <person name="Toyoda T."/>
            <person name="Konagaya A."/>
            <person name="Carninci P."/>
            <person name="Kawai J."/>
            <person name="Hayashizaki Y."/>
            <person name="Shinozaki K."/>
        </authorList>
    </citation>
    <scope>NUCLEOTIDE SEQUENCE [LARGE SCALE MRNA] OF 635-1065</scope>
    <source>
        <strain>cv. Columbia</strain>
    </source>
</reference>
<reference key="6">
    <citation type="journal article" date="2000" name="Genome Biol.">
        <title>Higher plant cellulose synthases.</title>
        <authorList>
            <person name="Richmond T."/>
        </authorList>
    </citation>
    <scope>GENE FAMILY</scope>
    <scope>NOMENCLATURE</scope>
</reference>
<reference key="7">
    <citation type="journal article" date="2001" name="Plant Cell">
        <title>The Arabidopsis mutant cev1 has constitutively active jasmonate and ethylene signal pathways and enhanced resistance to pathogens.</title>
        <authorList>
            <person name="Ellis C."/>
            <person name="Turner J.G."/>
        </authorList>
    </citation>
    <scope>FUNCTION</scope>
    <scope>MUTAGENESIS OF GLY-617</scope>
    <scope>DISRUPTION PHENOTYPE</scope>
</reference>
<reference key="8">
    <citation type="journal article" date="2001" name="Proc. Natl. Acad. Sci. U.S.A.">
        <title>Modifications of cellulose synthase confer resistance to isoxaben and thiazolidinone herbicides in Arabidopsis Ixr1 mutants.</title>
        <authorList>
            <person name="Scheible W.-R."/>
            <person name="Eshed R."/>
            <person name="Richmond T."/>
            <person name="Delmer D."/>
            <person name="Somerville C."/>
        </authorList>
    </citation>
    <scope>TISSUE SPECIFICITY</scope>
    <scope>MUTAGENESIS OF THR-942 AND GLY-998</scope>
</reference>
<reference key="9">
    <citation type="journal article" date="2002" name="Mol. Plant Microbe Interact.">
        <title>Constitutive activation of jasmonate signaling in an Arabidopsis mutant correlates with enhanced resistance to Erysiphe cichoracearum, Pseudomonas syringae, and Myzus persicae.</title>
        <authorList>
            <person name="Ellis C."/>
            <person name="Karafyllidis I."/>
            <person name="Turner J.G."/>
        </authorList>
    </citation>
    <scope>MUTAGENESIS OF GLY-617</scope>
</reference>
<reference key="10">
    <citation type="journal article" date="2002" name="Plant Cell">
        <title>The Arabidopsis mutant cev1 links cell wall signaling to jasmonate and ethylene responses.</title>
        <authorList>
            <person name="Ellis C."/>
            <person name="Karafyllidis I."/>
            <person name="Wasternack C."/>
            <person name="Turner J.G."/>
        </authorList>
    </citation>
    <scope>FUNCTION</scope>
    <scope>TISSUE SPECIFICITY</scope>
    <scope>MUTAGENESIS OF GLY-617</scope>
</reference>
<reference key="11">
    <citation type="journal article" date="2002" name="Plant Physiol.">
        <title>Functional analysis of the cellulose synthase genes CesA1, CesA2, and CesA3 in Arabidopsis.</title>
        <authorList>
            <person name="Burn J.E."/>
            <person name="Hocart C.H."/>
            <person name="Birch R.J."/>
            <person name="Cork A.C."/>
            <person name="Williamson R.E."/>
        </authorList>
    </citation>
    <scope>FUNCTION</scope>
    <scope>TISSUE SPECIFICITY</scope>
</reference>
<reference key="12">
    <citation type="journal article" date="2002" name="Plant Physiol.">
        <title>Genetic complexity of cellulose synthase A gene function in Arabidopsis embryogenesis.</title>
        <authorList>
            <person name="Beeckman T."/>
            <person name="Przemeck G.K.H."/>
            <person name="Stamatiou G."/>
            <person name="Lau R."/>
            <person name="Terryn N."/>
            <person name="De Rycke R."/>
            <person name="Inze D."/>
            <person name="Berleth T."/>
        </authorList>
    </citation>
    <scope>TISSUE SPECIFICITY</scope>
    <scope>DEVELOPMENTAL STAGE</scope>
</reference>
<reference key="13">
    <citation type="journal article" date="2003" name="Mol. Cell. Proteomics">
        <title>Large-scale analysis of in vivo phosphorylated membrane proteins by immobilized metal ion affinity chromatography and mass spectrometry.</title>
        <authorList>
            <person name="Nuehse T.S."/>
            <person name="Stensballe A."/>
            <person name="Jensen O.N."/>
            <person name="Peck S.C."/>
        </authorList>
    </citation>
    <scope>PHOSPHORYLATION [LARGE SCALE ANALYSIS] AT SER-151</scope>
    <scope>IDENTIFICATION BY MASS SPECTROMETRY [LARGE SCALE ANALYSIS]</scope>
    <source>
        <strain>cv. La-0</strain>
    </source>
</reference>
<reference key="14">
    <citation type="journal article" date="2003" name="Plant J.">
        <title>Reduced cellulose synthesis invokes lignification and defense responses in Arabidopsis thaliana.</title>
        <authorList>
            <person name="Cano-Delgado A."/>
            <person name="Penfield S."/>
            <person name="Smith C."/>
            <person name="Catley M."/>
            <person name="Bevan M."/>
        </authorList>
    </citation>
    <scope>FUNCTION</scope>
    <scope>MUTAGENESIS OF SER-301</scope>
    <scope>CATALYTIC ACTIVITY</scope>
</reference>
<reference key="15">
    <citation type="journal article" date="2004" name="Plant Cell">
        <title>Phosphoproteomics of the Arabidopsis plasma membrane and a new phosphorylation site database.</title>
        <authorList>
            <person name="Nuehse T.S."/>
            <person name="Stensballe A."/>
            <person name="Jensen O.N."/>
            <person name="Peck S.C."/>
        </authorList>
    </citation>
    <scope>PHOSPHORYLATION [LARGE SCALE ANALYSIS] AT SER-3; SER-151 AND SER-216</scope>
    <scope>IDENTIFICATION BY MASS SPECTROMETRY [LARGE SCALE ANALYSIS]</scope>
</reference>
<reference key="16">
    <citation type="journal article" date="2006" name="Plant Physiol.">
        <title>Chimeric proteins suggest that the catalytic and/or C-terminal domains give CesA1 and CesA3 access to their specific sites in the cellulose synthase of primary walls.</title>
        <authorList>
            <person name="Wang J."/>
            <person name="Howles P.A."/>
            <person name="Cork A.H."/>
            <person name="Birch R.J."/>
            <person name="Williamson R.E."/>
        </authorList>
    </citation>
    <scope>MUTAGENESIS OF PRO-1056</scope>
</reference>
<reference key="17">
    <citation type="journal article" date="2007" name="Plant Mol. Biol.">
        <title>Identification of cellulose synthase AtCesA7 (IRX3) in vivo phosphorylation sites -- a potential role in regulating protein degradation.</title>
        <authorList>
            <person name="Taylor N.G."/>
        </authorList>
    </citation>
    <scope>PHOSPHORYLATION AT SER-3; SER-151; SER-211 AND SER-216</scope>
    <scope>IDENTIFICATION BY MASS SPECTROMETRY</scope>
</reference>
<reference key="18">
    <citation type="journal article" date="2007" name="Proc. Natl. Acad. Sci. U.S.A.">
        <title>Genetic evidence for three unique components in primary cell-wall cellulose synthase complexes in Arabidopsis.</title>
        <authorList>
            <person name="Persson S."/>
            <person name="Paredez A."/>
            <person name="Carroll A."/>
            <person name="Palsdottir H."/>
            <person name="Doblin M."/>
            <person name="Poindexter P."/>
            <person name="Khitrov N."/>
            <person name="Auer M."/>
            <person name="Somerville C.R."/>
        </authorList>
    </citation>
    <scope>FUNCTION</scope>
    <scope>SUBUNIT</scope>
</reference>
<reference key="19">
    <citation type="journal article" date="2007" name="Proc. Natl. Acad. Sci. U.S.A.">
        <title>Organization of cellulose synthase complexes involved in primary cell wall synthesis in Arabidopsis thaliana.</title>
        <authorList>
            <person name="Desprez T."/>
            <person name="Juraniec M."/>
            <person name="Crowell E.F."/>
            <person name="Jouy H."/>
            <person name="Pochylova Z."/>
            <person name="Parcy F."/>
            <person name="Hoefte H."/>
            <person name="Gonneau M."/>
            <person name="Vernhettes S."/>
        </authorList>
    </citation>
    <scope>FUNCTION</scope>
    <scope>INTERACTION WITH CESA1 AND CESA6</scope>
</reference>
<reference key="20">
    <citation type="journal article" date="2009" name="Plant Physiol.">
        <title>Large-scale Arabidopsis phosphoproteome profiling reveals novel chloroplast kinase substrates and phosphorylation networks.</title>
        <authorList>
            <person name="Reiland S."/>
            <person name="Messerli G."/>
            <person name="Baerenfaller K."/>
            <person name="Gerrits B."/>
            <person name="Endler A."/>
            <person name="Grossmann J."/>
            <person name="Gruissem W."/>
            <person name="Baginsky S."/>
        </authorList>
    </citation>
    <scope>PHOSPHORYLATION [LARGE SCALE ANALYSIS] AT SER-151 AND SER-216</scope>
    <scope>IDENTIFICATION BY MASS SPECTROMETRY [LARGE SCALE ANALYSIS]</scope>
</reference>
<reference key="21">
    <citation type="journal article" date="2010" name="Proc. Natl. Acad. Sci. U.S.A.">
        <title>Identification of a cellulose synthase-associated protein required for cellulose biosynthesis.</title>
        <authorList>
            <person name="Gu Y."/>
            <person name="Kaplinsky N."/>
            <person name="Bringmann M."/>
            <person name="Cobb A."/>
            <person name="Carroll A."/>
            <person name="Sampathkumar A."/>
            <person name="Baskin T.I."/>
            <person name="Persson S."/>
            <person name="Somerville C.R."/>
        </authorList>
    </citation>
    <scope>INTERACTION WITH CSI1</scope>
    <source>
        <strain>cv. Columbia</strain>
    </source>
</reference>
<reference key="22">
    <citation type="journal article" date="2013" name="Plant Cell">
        <title>Cellulose synthase INTERACTIVE3 regulates cellulose biosynthesis in both a microtubule-dependent and microtubule-independent manner in Arabidopsis.</title>
        <authorList>
            <person name="Lei L."/>
            <person name="Li S."/>
            <person name="Du J."/>
            <person name="Bashline L."/>
            <person name="Gu Y."/>
        </authorList>
    </citation>
    <scope>INTERACTION WITH CSI1 AND CSI3</scope>
</reference>
<reference key="23">
    <citation type="journal article" date="2016" name="Nat. Commun.">
        <title>Golgi-localized STELLO proteins regulate the assembly and trafficking of cellulose synthase complexes in Arabidopsis.</title>
        <authorList>
            <person name="Zhang Y."/>
            <person name="Nikolovski N."/>
            <person name="Sorieul M."/>
            <person name="Vellosillo T."/>
            <person name="McFarlane H.E."/>
            <person name="Dupree R."/>
            <person name="Kesten C."/>
            <person name="Schneider R."/>
            <person name="Driemeier C."/>
            <person name="Lathe R."/>
            <person name="Lampugnani E."/>
            <person name="Yu X."/>
            <person name="Ivakov A."/>
            <person name="Doblin M.S."/>
            <person name="Mortimer J.C."/>
            <person name="Brown S.P."/>
            <person name="Persson S."/>
            <person name="Dupree P."/>
        </authorList>
    </citation>
    <scope>INTERACTION WITH STL1 AND STL2</scope>
    <scope>LACK OF INTERACTION WITH GOT1</scope>
</reference>
<reference key="24">
    <citation type="journal article" date="2022" name="Plant Mol. Biol.">
        <title>Tip growth defective1 interacts with cellulose synthase A3 to regulate cellulose biosynthesis in Arabidopsis.</title>
        <authorList>
            <person name="Zhang L."/>
            <person name="Thapa Magar M.S."/>
            <person name="Wang Y."/>
            <person name="Cheng Y."/>
        </authorList>
    </citation>
    <scope>DISRUPTION PHENOTYPE</scope>
    <scope>INTERACTION WITH PAT24/TIP1</scope>
    <scope>PALMITOYLATION</scope>
    <source>
        <strain>cv. Columbia</strain>
    </source>
</reference>
<reference key="25">
    <citation type="journal article" date="2021" name="Proc. Natl. Acad. Sci. U.S.A.">
        <title>Structure of Arabidopsis CESA3 catalytic domain with its substrate UDP-glucose provides insight into the mechanism of cellulose synthesis.</title>
        <authorList>
            <person name="Qiao Z."/>
            <person name="Lampugnani E.R."/>
            <person name="Yan X.F."/>
            <person name="Khan G.A."/>
            <person name="Saw W.G."/>
            <person name="Hannah P."/>
            <person name="Qian F."/>
            <person name="Calabria J."/>
            <person name="Miao Y."/>
            <person name="Grueber G."/>
            <person name="Persson S."/>
            <person name="Gao Y.G."/>
        </authorList>
    </citation>
    <scope>X-RAY CRYSTALLOGRAPHY (2.05 ANGSTROMS) OF 317-630 AND 702-792 IN COMPLEX WITH MANGANESE AND UDP-GLUCOSE</scope>
    <scope>HOMODIMER</scope>
    <scope>MUTAGENESIS OF GLN-571 AND CYS-573</scope>
    <scope>COFACTOR</scope>
</reference>
<comment type="function">
    <text evidence="6 8 9 12 15 16">Catalytic subunit of cellulose synthase terminal complexes ('rosettes'), required for beta-1,4-glucan microfibril crystallization, a major mechanism of the cell wall formation. Involved in the primary cell wall formation, especially in roots.</text>
</comment>
<comment type="catalytic activity">
    <reaction evidence="31">
        <text>[(1-&gt;4)-beta-D-glucosyl](n) + UDP-alpha-D-glucose = [(1-&gt;4)-beta-D-glucosyl](n+1) + UDP + H(+)</text>
        <dbReference type="Rhea" id="RHEA:19929"/>
        <dbReference type="Rhea" id="RHEA-COMP:10033"/>
        <dbReference type="Rhea" id="RHEA-COMP:10034"/>
        <dbReference type="ChEBI" id="CHEBI:15378"/>
        <dbReference type="ChEBI" id="CHEBI:18246"/>
        <dbReference type="ChEBI" id="CHEBI:58223"/>
        <dbReference type="ChEBI" id="CHEBI:58885"/>
        <dbReference type="EC" id="2.4.1.12"/>
    </reaction>
</comment>
<comment type="cofactor">
    <cofactor evidence="1">
        <name>Zn(2+)</name>
        <dbReference type="ChEBI" id="CHEBI:29105"/>
    </cofactor>
    <text evidence="1">Binds 2 Zn(2+) ions per subunit.</text>
</comment>
<comment type="cofactor">
    <cofactor evidence="20">
        <name>Mn(2+)</name>
        <dbReference type="ChEBI" id="CHEBI:29035"/>
    </cofactor>
</comment>
<comment type="pathway">
    <text>Glycan metabolism; plant cellulose biosynthesis.</text>
</comment>
<comment type="subunit">
    <text evidence="15 16 17 18 19 20 21">Homodimer (PubMed:33729990). Interacts with CESA1 and CESA6. Interacts with STL1 and STL2, but not with GOT1 (PubMed:27277162). Binds to CSI1 and CSI3 (PubMed:20616083, PubMed:24368796). Interacts with PAT24/TIP1 (PubMed:35644016).</text>
</comment>
<comment type="interaction">
    <interactant intactId="EBI-4448240">
        <id>Q941L0</id>
    </interactant>
    <interactant intactId="EBI-15659159">
        <id>Q94JQ6</id>
        <label>CESA6</label>
    </interactant>
    <organismsDiffer>false</organismsDiffer>
    <experiments>2</experiments>
</comment>
<comment type="subcellular location">
    <subcellularLocation>
        <location evidence="30">Cell membrane</location>
        <topology evidence="2">Multi-pass membrane protein</topology>
    </subcellularLocation>
    <subcellularLocation>
        <location evidence="20">Golgi apparatus membrane</location>
        <topology evidence="2">Multi-pass membrane protein</topology>
    </subcellularLocation>
</comment>
<comment type="tissue specificity">
    <text evidence="7 8 9 11">Expressed in young plants, flowers and roots, and to a lower extent in leaves and stems. Localized in all cells except meristematic cells. Accumulates particularly in root caps, root hairs, epidermal layer, midveins of leaves and anthers. Not present in old tissues.</text>
</comment>
<comment type="developmental stage">
    <text evidence="11">Mostly expressed in cotyledons during all steps of embryogenesis, and decrease toward the bent-cotyledon stage.</text>
</comment>
<comment type="PTM">
    <text evidence="21">Palmitoylated, in part by PAT24/TIP1.</text>
</comment>
<comment type="disruption phenotype">
    <text evidence="6 21">Mutants cev1 are dark green and contains more jasmonates and ethylene, that leads to shorter and thickened hypocotyls and roots, with prolific root hairs, and the accumulation of purple anthocyanins. They exhibit constitutive and high expression in leaves lamina of vegetative storage proteins (VSP1 and VSP2), basic chitinase CHI-B and plant defensin PDF1.2. In addition, this mutation confers resistance to powdery mildew pathogens such as E.cichoracearum, E.orontii and O.lycopersicum, to the bacterial pathogen P.syringae pv maculicola, and also to the green peach aphid M.persicae (PubMed:11340179). The double mutant tip1-5 ixr1-2 exhibits a reduced plant growth with stronger developmental defects phenotypes than each single mutant and associated with thin cell walls and reduced cellulose content in iterfascicular fiber cells (PubMed:35644016).</text>
</comment>
<comment type="similarity">
    <text evidence="30">Belongs to the glycosyltransferase 2 family. Plant cellulose synthase subfamily.</text>
</comment>
<proteinExistence type="evidence at protein level"/>
<keyword id="KW-0002">3D-structure</keyword>
<keyword id="KW-1003">Cell membrane</keyword>
<keyword id="KW-0961">Cell wall biogenesis/degradation</keyword>
<keyword id="KW-0135">Cellulose biosynthesis</keyword>
<keyword id="KW-0175">Coiled coil</keyword>
<keyword id="KW-0325">Glycoprotein</keyword>
<keyword id="KW-0328">Glycosyltransferase</keyword>
<keyword id="KW-0333">Golgi apparatus</keyword>
<keyword id="KW-0449">Lipoprotein</keyword>
<keyword id="KW-0464">Manganese</keyword>
<keyword id="KW-0472">Membrane</keyword>
<keyword id="KW-0479">Metal-binding</keyword>
<keyword id="KW-0564">Palmitate</keyword>
<keyword id="KW-0597">Phosphoprotein</keyword>
<keyword id="KW-1185">Reference proteome</keyword>
<keyword id="KW-0808">Transferase</keyword>
<keyword id="KW-0812">Transmembrane</keyword>
<keyword id="KW-1133">Transmembrane helix</keyword>
<keyword id="KW-0862">Zinc</keyword>
<keyword id="KW-0863">Zinc-finger</keyword>
<name>CESA3_ARATH</name>
<organism>
    <name type="scientific">Arabidopsis thaliana</name>
    <name type="common">Mouse-ear cress</name>
    <dbReference type="NCBI Taxonomy" id="3702"/>
    <lineage>
        <taxon>Eukaryota</taxon>
        <taxon>Viridiplantae</taxon>
        <taxon>Streptophyta</taxon>
        <taxon>Embryophyta</taxon>
        <taxon>Tracheophyta</taxon>
        <taxon>Spermatophyta</taxon>
        <taxon>Magnoliopsida</taxon>
        <taxon>eudicotyledons</taxon>
        <taxon>Gunneridae</taxon>
        <taxon>Pentapetalae</taxon>
        <taxon>rosids</taxon>
        <taxon>malvids</taxon>
        <taxon>Brassicales</taxon>
        <taxon>Brassicaceae</taxon>
        <taxon>Camelineae</taxon>
        <taxon>Arabidopsis</taxon>
    </lineage>
</organism>
<gene>
    <name evidence="22 25" type="primary">CESA3</name>
    <name evidence="24 25" type="synonym">ATHB</name>
    <name evidence="23 26" type="synonym">CEV1</name>
    <name evidence="27" type="synonym">ELI1</name>
    <name evidence="24" type="synonym">IXR1</name>
    <name evidence="28 29" type="synonym">RSW5</name>
    <name evidence="32" type="ordered locus">At5g05170</name>
    <name evidence="33" type="ORF">K2A11.4</name>
</gene>
<protein>
    <recommendedName>
        <fullName evidence="22 25">Cellulose synthase A catalytic subunit 3 [UDP-forming]</fullName>
        <shortName evidence="22 25">AtCesA3</shortName>
        <ecNumber evidence="31">2.4.1.12</ecNumber>
    </recommendedName>
    <alternativeName>
        <fullName evidence="23 26">Constitutive expression of VSP1 protein 1</fullName>
    </alternativeName>
    <alternativeName>
        <fullName evidence="24">Isoxaben-resistant protein 1</fullName>
        <shortName evidence="24 25">Ath-B</shortName>
    </alternativeName>
    <alternativeName>
        <fullName evidence="27">Protein ECTOPIC LIGNIN 1</fullName>
    </alternativeName>
    <alternativeName>
        <fullName evidence="28 29">Protein RADIALLY SWOLLEN 5</fullName>
        <shortName evidence="28 29">AtRSW5</shortName>
    </alternativeName>
</protein>
<evidence type="ECO:0000250" key="1">
    <source>
        <dbReference type="UniProtKB" id="Q9SWW6"/>
    </source>
</evidence>
<evidence type="ECO:0000255" key="2"/>
<evidence type="ECO:0000255" key="3">
    <source>
        <dbReference type="PROSITE-ProRule" id="PRU00175"/>
    </source>
</evidence>
<evidence type="ECO:0000255" key="4">
    <source>
        <dbReference type="PROSITE-ProRule" id="PRU00498"/>
    </source>
</evidence>
<evidence type="ECO:0000256" key="5">
    <source>
        <dbReference type="SAM" id="MobiDB-lite"/>
    </source>
</evidence>
<evidence type="ECO:0000269" key="6">
    <source>
    </source>
</evidence>
<evidence type="ECO:0000269" key="7">
    <source>
    </source>
</evidence>
<evidence type="ECO:0000269" key="8">
    <source>
    </source>
</evidence>
<evidence type="ECO:0000269" key="9">
    <source>
    </source>
</evidence>
<evidence type="ECO:0000269" key="10">
    <source>
    </source>
</evidence>
<evidence type="ECO:0000269" key="11">
    <source>
    </source>
</evidence>
<evidence type="ECO:0000269" key="12">
    <source>
    </source>
</evidence>
<evidence type="ECO:0000269" key="13">
    <source>
    </source>
</evidence>
<evidence type="ECO:0000269" key="14">
    <source>
    </source>
</evidence>
<evidence type="ECO:0000269" key="15">
    <source>
    </source>
</evidence>
<evidence type="ECO:0000269" key="16">
    <source>
    </source>
</evidence>
<evidence type="ECO:0000269" key="17">
    <source>
    </source>
</evidence>
<evidence type="ECO:0000269" key="18">
    <source>
    </source>
</evidence>
<evidence type="ECO:0000269" key="19">
    <source>
    </source>
</evidence>
<evidence type="ECO:0000269" key="20">
    <source>
    </source>
</evidence>
<evidence type="ECO:0000269" key="21">
    <source>
    </source>
</evidence>
<evidence type="ECO:0000303" key="22">
    <source>
    </source>
</evidence>
<evidence type="ECO:0000303" key="23">
    <source>
    </source>
</evidence>
<evidence type="ECO:0000303" key="24">
    <source>
    </source>
</evidence>
<evidence type="ECO:0000303" key="25">
    <source>
    </source>
</evidence>
<evidence type="ECO:0000303" key="26">
    <source>
    </source>
</evidence>
<evidence type="ECO:0000303" key="27">
    <source>
    </source>
</evidence>
<evidence type="ECO:0000303" key="28">
    <source>
    </source>
</evidence>
<evidence type="ECO:0000303" key="29">
    <source>
    </source>
</evidence>
<evidence type="ECO:0000305" key="30"/>
<evidence type="ECO:0000305" key="31">
    <source>
    </source>
</evidence>
<evidence type="ECO:0000312" key="32">
    <source>
        <dbReference type="Araport" id="AT5G05170"/>
    </source>
</evidence>
<evidence type="ECO:0000312" key="33">
    <source>
        <dbReference type="EMBL" id="BAB09693.1"/>
    </source>
</evidence>
<evidence type="ECO:0007744" key="34">
    <source>
        <dbReference type="PDB" id="7CK2"/>
    </source>
</evidence>
<evidence type="ECO:0007744" key="35">
    <source>
    </source>
</evidence>
<evidence type="ECO:0007744" key="36">
    <source>
    </source>
</evidence>
<evidence type="ECO:0007744" key="37">
    <source>
    </source>
</evidence>
<evidence type="ECO:0007829" key="38">
    <source>
        <dbReference type="PDB" id="7CK2"/>
    </source>
</evidence>
<evidence type="ECO:0007829" key="39">
    <source>
        <dbReference type="PDB" id="7CK3"/>
    </source>
</evidence>